<keyword id="KW-0472">Membrane</keyword>
<keyword id="KW-1185">Reference proteome</keyword>
<keyword id="KW-0762">Sugar transport</keyword>
<keyword id="KW-0769">Symport</keyword>
<keyword id="KW-0812">Transmembrane</keyword>
<keyword id="KW-1133">Transmembrane helix</keyword>
<keyword id="KW-0813">Transport</keyword>
<protein>
    <recommendedName>
        <fullName>General alpha-glucoside permease</fullName>
    </recommendedName>
</protein>
<reference key="1">
    <citation type="journal article" date="2002" name="Nature">
        <title>The genome sequence of Schizosaccharomyces pombe.</title>
        <authorList>
            <person name="Wood V."/>
            <person name="Gwilliam R."/>
            <person name="Rajandream M.A."/>
            <person name="Lyne M.H."/>
            <person name="Lyne R."/>
            <person name="Stewart A."/>
            <person name="Sgouros J.G."/>
            <person name="Peat N."/>
            <person name="Hayles J."/>
            <person name="Baker S.G."/>
            <person name="Basham D."/>
            <person name="Bowman S."/>
            <person name="Brooks K."/>
            <person name="Brown D."/>
            <person name="Brown S."/>
            <person name="Chillingworth T."/>
            <person name="Churcher C.M."/>
            <person name="Collins M."/>
            <person name="Connor R."/>
            <person name="Cronin A."/>
            <person name="Davis P."/>
            <person name="Feltwell T."/>
            <person name="Fraser A."/>
            <person name="Gentles S."/>
            <person name="Goble A."/>
            <person name="Hamlin N."/>
            <person name="Harris D.E."/>
            <person name="Hidalgo J."/>
            <person name="Hodgson G."/>
            <person name="Holroyd S."/>
            <person name="Hornsby T."/>
            <person name="Howarth S."/>
            <person name="Huckle E.J."/>
            <person name="Hunt S."/>
            <person name="Jagels K."/>
            <person name="James K.D."/>
            <person name="Jones L."/>
            <person name="Jones M."/>
            <person name="Leather S."/>
            <person name="McDonald S."/>
            <person name="McLean J."/>
            <person name="Mooney P."/>
            <person name="Moule S."/>
            <person name="Mungall K.L."/>
            <person name="Murphy L.D."/>
            <person name="Niblett D."/>
            <person name="Odell C."/>
            <person name="Oliver K."/>
            <person name="O'Neil S."/>
            <person name="Pearson D."/>
            <person name="Quail M.A."/>
            <person name="Rabbinowitsch E."/>
            <person name="Rutherford K.M."/>
            <person name="Rutter S."/>
            <person name="Saunders D."/>
            <person name="Seeger K."/>
            <person name="Sharp S."/>
            <person name="Skelton J."/>
            <person name="Simmonds M.N."/>
            <person name="Squares R."/>
            <person name="Squares S."/>
            <person name="Stevens K."/>
            <person name="Taylor K."/>
            <person name="Taylor R.G."/>
            <person name="Tivey A."/>
            <person name="Walsh S.V."/>
            <person name="Warren T."/>
            <person name="Whitehead S."/>
            <person name="Woodward J.R."/>
            <person name="Volckaert G."/>
            <person name="Aert R."/>
            <person name="Robben J."/>
            <person name="Grymonprez B."/>
            <person name="Weltjens I."/>
            <person name="Vanstreels E."/>
            <person name="Rieger M."/>
            <person name="Schaefer M."/>
            <person name="Mueller-Auer S."/>
            <person name="Gabel C."/>
            <person name="Fuchs M."/>
            <person name="Duesterhoeft A."/>
            <person name="Fritzc C."/>
            <person name="Holzer E."/>
            <person name="Moestl D."/>
            <person name="Hilbert H."/>
            <person name="Borzym K."/>
            <person name="Langer I."/>
            <person name="Beck A."/>
            <person name="Lehrach H."/>
            <person name="Reinhardt R."/>
            <person name="Pohl T.M."/>
            <person name="Eger P."/>
            <person name="Zimmermann W."/>
            <person name="Wedler H."/>
            <person name="Wambutt R."/>
            <person name="Purnelle B."/>
            <person name="Goffeau A."/>
            <person name="Cadieu E."/>
            <person name="Dreano S."/>
            <person name="Gloux S."/>
            <person name="Lelaure V."/>
            <person name="Mottier S."/>
            <person name="Galibert F."/>
            <person name="Aves S.J."/>
            <person name="Xiang Z."/>
            <person name="Hunt C."/>
            <person name="Moore K."/>
            <person name="Hurst S.M."/>
            <person name="Lucas M."/>
            <person name="Rochet M."/>
            <person name="Gaillardin C."/>
            <person name="Tallada V.A."/>
            <person name="Garzon A."/>
            <person name="Thode G."/>
            <person name="Daga R.R."/>
            <person name="Cruzado L."/>
            <person name="Jimenez J."/>
            <person name="Sanchez M."/>
            <person name="del Rey F."/>
            <person name="Benito J."/>
            <person name="Dominguez A."/>
            <person name="Revuelta J.L."/>
            <person name="Moreno S."/>
            <person name="Armstrong J."/>
            <person name="Forsburg S.L."/>
            <person name="Cerutti L."/>
            <person name="Lowe T."/>
            <person name="McCombie W.R."/>
            <person name="Paulsen I."/>
            <person name="Potashkin J."/>
            <person name="Shpakovski G.V."/>
            <person name="Ussery D."/>
            <person name="Barrell B.G."/>
            <person name="Nurse P."/>
        </authorList>
    </citation>
    <scope>NUCLEOTIDE SEQUENCE [LARGE SCALE GENOMIC DNA]</scope>
    <source>
        <strain>972 / ATCC 24843</strain>
    </source>
</reference>
<reference key="2">
    <citation type="journal article" date="2000" name="Genes Cells">
        <title>Large-scale screening of intracellular protein localization in living fission yeast cells by the use of a GFP-fusion genomic DNA library.</title>
        <authorList>
            <person name="Ding D.-Q."/>
            <person name="Tomita Y."/>
            <person name="Yamamoto A."/>
            <person name="Chikashige Y."/>
            <person name="Haraguchi T."/>
            <person name="Hiraoka Y."/>
        </authorList>
    </citation>
    <scope>NUCLEOTIDE SEQUENCE [LARGE SCALE GENOMIC DNA] OF 35-166</scope>
    <source>
        <strain>ATCC 38364 / 968</strain>
    </source>
</reference>
<reference key="3">
    <citation type="journal article" date="2001" name="Mol. Microbiol.">
        <title>Functional characterization of the alpha-glucoside transporter Sut1p from Schizosaccharomyces pombe, the first fungal homologue of plant sucrose transporters.</title>
        <authorList>
            <person name="Reinders A."/>
            <person name="Ward J.M."/>
        </authorList>
    </citation>
    <scope>IDENTIFICATION</scope>
    <scope>FUNCTION</scope>
</reference>
<organism>
    <name type="scientific">Schizosaccharomyces pombe (strain 972 / ATCC 24843)</name>
    <name type="common">Fission yeast</name>
    <dbReference type="NCBI Taxonomy" id="284812"/>
    <lineage>
        <taxon>Eukaryota</taxon>
        <taxon>Fungi</taxon>
        <taxon>Dikarya</taxon>
        <taxon>Ascomycota</taxon>
        <taxon>Taphrinomycotina</taxon>
        <taxon>Schizosaccharomycetes</taxon>
        <taxon>Schizosaccharomycetales</taxon>
        <taxon>Schizosaccharomycetaceae</taxon>
        <taxon>Schizosaccharomyces</taxon>
    </lineage>
</organism>
<gene>
    <name type="primary">sut1</name>
    <name type="ORF">SPAC2F3.08</name>
</gene>
<evidence type="ECO:0000255" key="1"/>
<evidence type="ECO:0000256" key="2">
    <source>
        <dbReference type="SAM" id="MobiDB-lite"/>
    </source>
</evidence>
<evidence type="ECO:0000269" key="3">
    <source>
    </source>
</evidence>
<evidence type="ECO:0000305" key="4"/>
<sequence length="553" mass="61745">MSVDENQLENGQLLSSENEASSPFKESIPSRSSLYLIALTVSLLGVQLTWSVELGYGTPYLFSLGLRKEWTSIIWIAGPLTGILIQPIAGILSDRVNSRIGRRRPFMLCASLLGTFSLFLMGWAPDICLFIFSNEVLMKRVTIVLATISIYLLDVAVNVVMASTRSLIVDSVRSDQQHEANSWAGRMIGVGNVLGYLLGYLPLYRIFSFLNFTQLQVFCVLASISLVLTVTITTIFVSERRFPPVEHEKSVAGEIFEFFTTMRQSITALPFTLKRICFVQFFAYFGWFPFLFYITTYVGILYLRHAPKGHEEDWDMATRQGSFALLLFAIISLAANTALPLLLEDTEDDEEDESSDASNNEYNIQERNDLGNIRTGTNTPRLGNLSETTSFRSENEPSRRRLLPSSRSIMTTISSKVQIKGLTLPILWLSSHVLFGVCMLSTIFLQTSWQAQAMVAICGLSWACTLWIPYSLFSSEIGKLGLRESSGKMIGVHNVFISAPQVLSTIIATIVFIQSEGSHRDIADNSIAWVLRIGGISAFLAAYQCRHLLPINF</sequence>
<accession>O14091</accession>
<accession>Q9UU60</accession>
<name>SUT1_SCHPO</name>
<feature type="chain" id="PRO_0000122532" description="General alpha-glucoside permease">
    <location>
        <begin position="1"/>
        <end position="553"/>
    </location>
</feature>
<feature type="topological domain" description="Cytoplasmic" evidence="1">
    <location>
        <begin position="1"/>
        <end position="33"/>
    </location>
</feature>
<feature type="transmembrane region" description="Helical" evidence="1">
    <location>
        <begin position="34"/>
        <end position="54"/>
    </location>
</feature>
<feature type="topological domain" description="Extracellular" evidence="1">
    <location>
        <begin position="55"/>
        <end position="72"/>
    </location>
</feature>
<feature type="transmembrane region" description="Helical" evidence="1">
    <location>
        <begin position="73"/>
        <end position="93"/>
    </location>
</feature>
<feature type="topological domain" description="Cytoplasmic" evidence="1">
    <location>
        <begin position="94"/>
        <end position="111"/>
    </location>
</feature>
<feature type="transmembrane region" description="Helical" evidence="1">
    <location>
        <begin position="112"/>
        <end position="132"/>
    </location>
</feature>
<feature type="topological domain" description="Extracellular" evidence="1">
    <location>
        <begin position="133"/>
        <end position="140"/>
    </location>
</feature>
<feature type="transmembrane region" description="Helical" evidence="1">
    <location>
        <begin position="141"/>
        <end position="161"/>
    </location>
</feature>
<feature type="topological domain" description="Cytoplasmic" evidence="1">
    <location>
        <begin position="162"/>
        <end position="186"/>
    </location>
</feature>
<feature type="transmembrane region" description="Helical" evidence="1">
    <location>
        <begin position="187"/>
        <end position="207"/>
    </location>
</feature>
<feature type="topological domain" description="Extracellular" evidence="1">
    <location>
        <begin position="208"/>
        <end position="216"/>
    </location>
</feature>
<feature type="transmembrane region" description="Helical" evidence="1">
    <location>
        <begin position="217"/>
        <end position="237"/>
    </location>
</feature>
<feature type="topological domain" description="Cytoplasmic" evidence="1">
    <location>
        <begin position="238"/>
        <end position="280"/>
    </location>
</feature>
<feature type="transmembrane region" description="Helical" evidence="1">
    <location>
        <begin position="281"/>
        <end position="301"/>
    </location>
</feature>
<feature type="topological domain" description="Extracellular" evidence="1">
    <location>
        <begin position="302"/>
        <end position="322"/>
    </location>
</feature>
<feature type="transmembrane region" description="Helical" evidence="1">
    <location>
        <begin position="323"/>
        <end position="343"/>
    </location>
</feature>
<feature type="topological domain" description="Cytoplasmic" evidence="1">
    <location>
        <begin position="344"/>
        <end position="424"/>
    </location>
</feature>
<feature type="transmembrane region" description="Helical" evidence="1">
    <location>
        <begin position="425"/>
        <end position="445"/>
    </location>
</feature>
<feature type="topological domain" description="Extracellular" evidence="1">
    <location>
        <begin position="446"/>
        <end position="452"/>
    </location>
</feature>
<feature type="transmembrane region" description="Helical" evidence="1">
    <location>
        <begin position="453"/>
        <end position="473"/>
    </location>
</feature>
<feature type="topological domain" description="Cytoplasmic" evidence="1">
    <location>
        <begin position="474"/>
        <end position="494"/>
    </location>
</feature>
<feature type="transmembrane region" description="Helical" evidence="1">
    <location>
        <begin position="495"/>
        <end position="515"/>
    </location>
</feature>
<feature type="topological domain" description="Extracellular" evidence="1">
    <location>
        <begin position="516"/>
        <end position="521"/>
    </location>
</feature>
<feature type="transmembrane region" description="Helical" evidence="1">
    <location>
        <begin position="522"/>
        <end position="542"/>
    </location>
</feature>
<feature type="topological domain" description="Cytoplasmic" evidence="1">
    <location>
        <begin position="543"/>
        <end position="553"/>
    </location>
</feature>
<feature type="region of interest" description="Disordered" evidence="2">
    <location>
        <begin position="1"/>
        <end position="26"/>
    </location>
</feature>
<feature type="region of interest" description="Disordered" evidence="2">
    <location>
        <begin position="368"/>
        <end position="399"/>
    </location>
</feature>
<feature type="compositionally biased region" description="Polar residues" evidence="2">
    <location>
        <begin position="1"/>
        <end position="21"/>
    </location>
</feature>
<feature type="compositionally biased region" description="Polar residues" evidence="2">
    <location>
        <begin position="374"/>
        <end position="392"/>
    </location>
</feature>
<dbReference type="EMBL" id="CU329670">
    <property type="protein sequence ID" value="CAB16264.1"/>
    <property type="molecule type" value="Genomic_DNA"/>
</dbReference>
<dbReference type="EMBL" id="AB027797">
    <property type="protein sequence ID" value="BAA87101.1"/>
    <property type="molecule type" value="Genomic_DNA"/>
</dbReference>
<dbReference type="PIR" id="T38541">
    <property type="entry name" value="T38541"/>
</dbReference>
<dbReference type="RefSeq" id="NP_594387.1">
    <property type="nucleotide sequence ID" value="NM_001019808.2"/>
</dbReference>
<dbReference type="SMR" id="O14091"/>
<dbReference type="BioGRID" id="278450">
    <property type="interactions" value="17"/>
</dbReference>
<dbReference type="FunCoup" id="O14091">
    <property type="interactions" value="74"/>
</dbReference>
<dbReference type="STRING" id="284812.O14091"/>
<dbReference type="TCDB" id="2.A.2.4.16">
    <property type="family name" value="the glycoside-pentoside-hexuronide (gph):cation symporter family"/>
</dbReference>
<dbReference type="iPTMnet" id="O14091"/>
<dbReference type="PaxDb" id="4896-SPAC2F3.08.1"/>
<dbReference type="EnsemblFungi" id="SPAC2F3.08.1">
    <property type="protein sequence ID" value="SPAC2F3.08.1:pep"/>
    <property type="gene ID" value="SPAC2F3.08"/>
</dbReference>
<dbReference type="PomBase" id="SPAC2F3.08">
    <property type="gene designation" value="sut1"/>
</dbReference>
<dbReference type="VEuPathDB" id="FungiDB:SPAC2F3.08"/>
<dbReference type="eggNOG" id="KOG0637">
    <property type="taxonomic scope" value="Eukaryota"/>
</dbReference>
<dbReference type="HOGENOM" id="CLU_018303_1_1_1"/>
<dbReference type="InParanoid" id="O14091"/>
<dbReference type="OMA" id="SITQWAP"/>
<dbReference type="PhylomeDB" id="O14091"/>
<dbReference type="Reactome" id="R-SPO-189200">
    <property type="pathway name" value="Cellular hexose transport"/>
</dbReference>
<dbReference type="PRO" id="PR:O14091"/>
<dbReference type="Proteomes" id="UP000002485">
    <property type="component" value="Chromosome I"/>
</dbReference>
<dbReference type="GO" id="GO:0000329">
    <property type="term" value="C:fungal-type vacuole membrane"/>
    <property type="evidence" value="ECO:0007005"/>
    <property type="project" value="PomBase"/>
</dbReference>
<dbReference type="GO" id="GO:0005794">
    <property type="term" value="C:Golgi apparatus"/>
    <property type="evidence" value="ECO:0007005"/>
    <property type="project" value="PomBase"/>
</dbReference>
<dbReference type="GO" id="GO:0005886">
    <property type="term" value="C:plasma membrane"/>
    <property type="evidence" value="ECO:0000269"/>
    <property type="project" value="PomBase"/>
</dbReference>
<dbReference type="GO" id="GO:0005364">
    <property type="term" value="F:maltose:proton symporter activity"/>
    <property type="evidence" value="ECO:0000314"/>
    <property type="project" value="PomBase"/>
</dbReference>
<dbReference type="GO" id="GO:0008506">
    <property type="term" value="F:sucrose:proton symporter activity"/>
    <property type="evidence" value="ECO:0000314"/>
    <property type="project" value="PomBase"/>
</dbReference>
<dbReference type="GO" id="GO:0106081">
    <property type="term" value="P:maltose import across plasma membrane"/>
    <property type="evidence" value="ECO:0000314"/>
    <property type="project" value="PomBase"/>
</dbReference>
<dbReference type="GO" id="GO:0106082">
    <property type="term" value="P:sucrose import across plasma membrane"/>
    <property type="evidence" value="ECO:0000314"/>
    <property type="project" value="PomBase"/>
</dbReference>
<dbReference type="CDD" id="cd17313">
    <property type="entry name" value="MFS_SLC45_SUC"/>
    <property type="match status" value="1"/>
</dbReference>
<dbReference type="Gene3D" id="1.20.1250.20">
    <property type="entry name" value="MFS general substrate transporter like domains"/>
    <property type="match status" value="1"/>
</dbReference>
<dbReference type="InterPro" id="IPR036259">
    <property type="entry name" value="MFS_trans_sf"/>
</dbReference>
<dbReference type="PANTHER" id="PTHR19432:SF35">
    <property type="entry name" value="SOLUTE CARRIER FAMILY 45 MEMBER 3 ISOFORM X1"/>
    <property type="match status" value="1"/>
</dbReference>
<dbReference type="PANTHER" id="PTHR19432">
    <property type="entry name" value="SUGAR TRANSPORTER"/>
    <property type="match status" value="1"/>
</dbReference>
<dbReference type="Pfam" id="PF13347">
    <property type="entry name" value="MFS_2"/>
    <property type="match status" value="1"/>
</dbReference>
<dbReference type="SUPFAM" id="SSF103473">
    <property type="entry name" value="MFS general substrate transporter"/>
    <property type="match status" value="1"/>
</dbReference>
<comment type="function">
    <text evidence="3">Responsible for the transport of maltose and sucrose into the cell, with the concomitant uptake of protons (symport system).</text>
</comment>
<comment type="subcellular location">
    <subcellularLocation>
        <location evidence="4">Membrane</location>
        <topology evidence="4">Multi-pass membrane protein</topology>
    </subcellularLocation>
</comment>
<comment type="similarity">
    <text evidence="4">Belongs to the glycoside-pentoside-hexuronide (GPH) cation symporter transporter (TC 2.A.2.4) family.</text>
</comment>
<proteinExistence type="inferred from homology"/>